<proteinExistence type="inferred from homology"/>
<gene>
    <name type="primary">leuE</name>
    <name type="ordered locus">UTI89_C1996</name>
</gene>
<comment type="function">
    <text evidence="1">Exporter of leucine.</text>
</comment>
<comment type="catalytic activity">
    <reaction evidence="1">
        <text>L-leucine(in) + H(+)(out) = L-leucine(out) + H(+)(in)</text>
        <dbReference type="Rhea" id="RHEA:28731"/>
        <dbReference type="ChEBI" id="CHEBI:15378"/>
        <dbReference type="ChEBI" id="CHEBI:57427"/>
    </reaction>
    <physiologicalReaction direction="left-to-right" evidence="1">
        <dbReference type="Rhea" id="RHEA:28732"/>
    </physiologicalReaction>
</comment>
<comment type="subcellular location">
    <subcellularLocation>
        <location evidence="1">Cell inner membrane</location>
        <topology evidence="2">Multi-pass membrane protein</topology>
    </subcellularLocation>
</comment>
<comment type="similarity">
    <text evidence="3">Belongs to the Rht family.</text>
</comment>
<sequence>MFAEYGVLNYWTYLVGAIFIVLVPGPNTLFVLKNSVSSGMKGGYLAACGVFIGDAVLMFLAWAGVATLIKTTPILFNIVRYLGAFYLLYLGSKILYATLKGKNSETKSDEPQYGAIFKRALILSLTNPKAILFYVSFFVQFIDVNAPHTGISFFILATTLELVSFCYLSFLIISGAFVTQYIRTKKKLAKVGNSLIGLMFVGFAARLATLQS</sequence>
<keyword id="KW-0029">Amino-acid transport</keyword>
<keyword id="KW-0050">Antiport</keyword>
<keyword id="KW-0997">Cell inner membrane</keyword>
<keyword id="KW-1003">Cell membrane</keyword>
<keyword id="KW-0472">Membrane</keyword>
<keyword id="KW-0812">Transmembrane</keyword>
<keyword id="KW-1133">Transmembrane helix</keyword>
<keyword id="KW-0813">Transport</keyword>
<evidence type="ECO:0000250" key="1">
    <source>
        <dbReference type="UniProtKB" id="P76249"/>
    </source>
</evidence>
<evidence type="ECO:0000255" key="2"/>
<evidence type="ECO:0000305" key="3"/>
<name>LEUE_ECOUT</name>
<reference key="1">
    <citation type="journal article" date="2006" name="Proc. Natl. Acad. Sci. U.S.A.">
        <title>Identification of genes subject to positive selection in uropathogenic strains of Escherichia coli: a comparative genomics approach.</title>
        <authorList>
            <person name="Chen S.L."/>
            <person name="Hung C.-S."/>
            <person name="Xu J."/>
            <person name="Reigstad C.S."/>
            <person name="Magrini V."/>
            <person name="Sabo A."/>
            <person name="Blasiar D."/>
            <person name="Bieri T."/>
            <person name="Meyer R.R."/>
            <person name="Ozersky P."/>
            <person name="Armstrong J.R."/>
            <person name="Fulton R.S."/>
            <person name="Latreille J.P."/>
            <person name="Spieth J."/>
            <person name="Hooton T.M."/>
            <person name="Mardis E.R."/>
            <person name="Hultgren S.J."/>
            <person name="Gordon J.I."/>
        </authorList>
    </citation>
    <scope>NUCLEOTIDE SEQUENCE [LARGE SCALE GENOMIC DNA]</scope>
    <source>
        <strain>UTI89 / UPEC</strain>
    </source>
</reference>
<dbReference type="EMBL" id="CP000243">
    <property type="protein sequence ID" value="ABE07472.1"/>
    <property type="molecule type" value="Genomic_DNA"/>
</dbReference>
<dbReference type="RefSeq" id="WP_000457211.1">
    <property type="nucleotide sequence ID" value="NZ_CP064825.1"/>
</dbReference>
<dbReference type="SMR" id="Q1RAZ2"/>
<dbReference type="KEGG" id="eci:UTI89_C1996"/>
<dbReference type="HOGENOM" id="CLU_079569_3_1_6"/>
<dbReference type="Proteomes" id="UP000001952">
    <property type="component" value="Chromosome"/>
</dbReference>
<dbReference type="GO" id="GO:0005886">
    <property type="term" value="C:plasma membrane"/>
    <property type="evidence" value="ECO:0007669"/>
    <property type="project" value="UniProtKB-SubCell"/>
</dbReference>
<dbReference type="GO" id="GO:0015297">
    <property type="term" value="F:antiporter activity"/>
    <property type="evidence" value="ECO:0007669"/>
    <property type="project" value="UniProtKB-KW"/>
</dbReference>
<dbReference type="GO" id="GO:0015190">
    <property type="term" value="F:L-leucine transmembrane transporter activity"/>
    <property type="evidence" value="ECO:0007669"/>
    <property type="project" value="TreeGrafter"/>
</dbReference>
<dbReference type="GO" id="GO:0015820">
    <property type="term" value="P:L-leucine transport"/>
    <property type="evidence" value="ECO:0007669"/>
    <property type="project" value="TreeGrafter"/>
</dbReference>
<dbReference type="InterPro" id="IPR001123">
    <property type="entry name" value="LeuE-type"/>
</dbReference>
<dbReference type="NCBIfam" id="NF008201">
    <property type="entry name" value="PRK10958.1"/>
    <property type="match status" value="1"/>
</dbReference>
<dbReference type="PANTHER" id="PTHR30086">
    <property type="entry name" value="ARGININE EXPORTER PROTEIN ARGO"/>
    <property type="match status" value="1"/>
</dbReference>
<dbReference type="PANTHER" id="PTHR30086:SF15">
    <property type="entry name" value="LEUCINE EFFLUX PROTEIN"/>
    <property type="match status" value="1"/>
</dbReference>
<dbReference type="Pfam" id="PF01810">
    <property type="entry name" value="LysE"/>
    <property type="match status" value="1"/>
</dbReference>
<dbReference type="PIRSF" id="PIRSF006324">
    <property type="entry name" value="LeuE"/>
    <property type="match status" value="1"/>
</dbReference>
<feature type="chain" id="PRO_0000316798" description="Leucine efflux protein">
    <location>
        <begin position="1"/>
        <end position="212"/>
    </location>
</feature>
<feature type="transmembrane region" description="Helical" evidence="2">
    <location>
        <begin position="12"/>
        <end position="32"/>
    </location>
</feature>
<feature type="transmembrane region" description="Helical" evidence="2">
    <location>
        <begin position="49"/>
        <end position="69"/>
    </location>
</feature>
<feature type="transmembrane region" description="Helical" evidence="2">
    <location>
        <begin position="71"/>
        <end position="91"/>
    </location>
</feature>
<feature type="transmembrane region" description="Helical" evidence="2">
    <location>
        <begin position="122"/>
        <end position="142"/>
    </location>
</feature>
<feature type="transmembrane region" description="Helical" evidence="2">
    <location>
        <begin position="153"/>
        <end position="173"/>
    </location>
</feature>
<feature type="transmembrane region" description="Helical" evidence="2">
    <location>
        <begin position="188"/>
        <end position="208"/>
    </location>
</feature>
<accession>Q1RAZ2</accession>
<organism>
    <name type="scientific">Escherichia coli (strain UTI89 / UPEC)</name>
    <dbReference type="NCBI Taxonomy" id="364106"/>
    <lineage>
        <taxon>Bacteria</taxon>
        <taxon>Pseudomonadati</taxon>
        <taxon>Pseudomonadota</taxon>
        <taxon>Gammaproteobacteria</taxon>
        <taxon>Enterobacterales</taxon>
        <taxon>Enterobacteriaceae</taxon>
        <taxon>Escherichia</taxon>
    </lineage>
</organism>
<protein>
    <recommendedName>
        <fullName evidence="1">Leucine efflux protein</fullName>
    </recommendedName>
</protein>